<feature type="chain" id="PRO_0000386605" description="Ell-associated factor Eaf">
    <location>
        <begin position="1"/>
        <end position="494"/>
    </location>
</feature>
<feature type="region of interest" description="Disordered" evidence="4">
    <location>
        <begin position="119"/>
        <end position="212"/>
    </location>
</feature>
<feature type="region of interest" description="Disordered" evidence="4">
    <location>
        <begin position="243"/>
        <end position="494"/>
    </location>
</feature>
<feature type="compositionally biased region" description="Polar residues" evidence="4">
    <location>
        <begin position="119"/>
        <end position="138"/>
    </location>
</feature>
<feature type="compositionally biased region" description="Low complexity" evidence="4">
    <location>
        <begin position="139"/>
        <end position="156"/>
    </location>
</feature>
<feature type="compositionally biased region" description="Polar residues" evidence="4">
    <location>
        <begin position="159"/>
        <end position="178"/>
    </location>
</feature>
<feature type="compositionally biased region" description="Polar residues" evidence="4">
    <location>
        <begin position="243"/>
        <end position="256"/>
    </location>
</feature>
<feature type="compositionally biased region" description="Polar residues" evidence="4">
    <location>
        <begin position="280"/>
        <end position="306"/>
    </location>
</feature>
<feature type="compositionally biased region" description="Low complexity" evidence="4">
    <location>
        <begin position="307"/>
        <end position="319"/>
    </location>
</feature>
<feature type="compositionally biased region" description="Polar residues" evidence="4">
    <location>
        <begin position="320"/>
        <end position="332"/>
    </location>
</feature>
<feature type="compositionally biased region" description="Low complexity" evidence="4">
    <location>
        <begin position="344"/>
        <end position="373"/>
    </location>
</feature>
<feature type="compositionally biased region" description="Acidic residues" evidence="4">
    <location>
        <begin position="374"/>
        <end position="389"/>
    </location>
</feature>
<feature type="compositionally biased region" description="Low complexity" evidence="4">
    <location>
        <begin position="414"/>
        <end position="424"/>
    </location>
</feature>
<feature type="compositionally biased region" description="Basic residues" evidence="4">
    <location>
        <begin position="437"/>
        <end position="454"/>
    </location>
</feature>
<feature type="compositionally biased region" description="Low complexity" evidence="4">
    <location>
        <begin position="455"/>
        <end position="464"/>
    </location>
</feature>
<feature type="compositionally biased region" description="Low complexity" evidence="4">
    <location>
        <begin position="475"/>
        <end position="488"/>
    </location>
</feature>
<feature type="modified residue" description="Phosphoserine" evidence="1">
    <location>
        <position position="188"/>
    </location>
</feature>
<evidence type="ECO:0000250" key="1">
    <source>
        <dbReference type="UniProtKB" id="Q7JRJ1"/>
    </source>
</evidence>
<evidence type="ECO:0000250" key="2">
    <source>
        <dbReference type="UniProtKB" id="Q96JC9"/>
    </source>
</evidence>
<evidence type="ECO:0000255" key="3"/>
<evidence type="ECO:0000256" key="4">
    <source>
        <dbReference type="SAM" id="MobiDB-lite"/>
    </source>
</evidence>
<evidence type="ECO:0000312" key="5">
    <source>
        <dbReference type="EMBL" id="EDW60980.1"/>
    </source>
</evidence>
<gene>
    <name evidence="1" type="primary">Eaf</name>
    <name type="ORF">GJ20555</name>
</gene>
<proteinExistence type="inferred from homology"/>
<dbReference type="EMBL" id="CH940648">
    <property type="protein sequence ID" value="EDW60980.1"/>
    <property type="molecule type" value="Genomic_DNA"/>
</dbReference>
<dbReference type="RefSeq" id="XP_002049787.1">
    <property type="nucleotide sequence ID" value="XM_002049751.4"/>
</dbReference>
<dbReference type="SMR" id="B4LMA2"/>
<dbReference type="FunCoup" id="B4LMA2">
    <property type="interactions" value="363"/>
</dbReference>
<dbReference type="STRING" id="7244.B4LMA2"/>
<dbReference type="EnsemblMetazoa" id="FBtr0236480">
    <property type="protein sequence ID" value="FBpp0234972"/>
    <property type="gene ID" value="FBgn0207695"/>
</dbReference>
<dbReference type="EnsemblMetazoa" id="XM_002049751.3">
    <property type="protein sequence ID" value="XP_002049787.1"/>
    <property type="gene ID" value="LOC6625701"/>
</dbReference>
<dbReference type="GeneID" id="6625701"/>
<dbReference type="KEGG" id="dvi:6625701"/>
<dbReference type="CTD" id="35660"/>
<dbReference type="eggNOG" id="KOG4795">
    <property type="taxonomic scope" value="Eukaryota"/>
</dbReference>
<dbReference type="HOGENOM" id="CLU_025755_2_1_1"/>
<dbReference type="InParanoid" id="B4LMA2"/>
<dbReference type="OMA" id="SSHMGKQ"/>
<dbReference type="OrthoDB" id="125903at2759"/>
<dbReference type="PhylomeDB" id="B4LMA2"/>
<dbReference type="Proteomes" id="UP000008792">
    <property type="component" value="Unassembled WGS sequence"/>
</dbReference>
<dbReference type="GO" id="GO:0005654">
    <property type="term" value="C:nucleoplasm"/>
    <property type="evidence" value="ECO:0000250"/>
    <property type="project" value="UniProtKB"/>
</dbReference>
<dbReference type="GO" id="GO:0032783">
    <property type="term" value="C:super elongation complex"/>
    <property type="evidence" value="ECO:0007669"/>
    <property type="project" value="EnsemblMetazoa"/>
</dbReference>
<dbReference type="GO" id="GO:0003711">
    <property type="term" value="F:transcription elongation factor activity"/>
    <property type="evidence" value="ECO:0007669"/>
    <property type="project" value="TreeGrafter"/>
</dbReference>
<dbReference type="GO" id="GO:0034605">
    <property type="term" value="P:cellular response to heat"/>
    <property type="evidence" value="ECO:0007669"/>
    <property type="project" value="EnsemblMetazoa"/>
</dbReference>
<dbReference type="GO" id="GO:0045893">
    <property type="term" value="P:positive regulation of DNA-templated transcription"/>
    <property type="evidence" value="ECO:0000250"/>
    <property type="project" value="UniProtKB"/>
</dbReference>
<dbReference type="GO" id="GO:0006368">
    <property type="term" value="P:transcription elongation by RNA polymerase II"/>
    <property type="evidence" value="ECO:0007669"/>
    <property type="project" value="InterPro"/>
</dbReference>
<dbReference type="InterPro" id="IPR027093">
    <property type="entry name" value="EAF_fam"/>
</dbReference>
<dbReference type="InterPro" id="IPR019194">
    <property type="entry name" value="Tscrpt_elong_fac_Eaf_N"/>
</dbReference>
<dbReference type="PANTHER" id="PTHR15970">
    <property type="entry name" value="ELL-ASSOCIATED FACTOR EAF"/>
    <property type="match status" value="1"/>
</dbReference>
<dbReference type="PANTHER" id="PTHR15970:SF2">
    <property type="entry name" value="ELL-ASSOCIATED FACTOR EAF"/>
    <property type="match status" value="1"/>
</dbReference>
<dbReference type="Pfam" id="PF09816">
    <property type="entry name" value="EAF"/>
    <property type="match status" value="1"/>
</dbReference>
<keyword id="KW-0010">Activator</keyword>
<keyword id="KW-0217">Developmental protein</keyword>
<keyword id="KW-0539">Nucleus</keyword>
<keyword id="KW-0597">Phosphoprotein</keyword>
<keyword id="KW-1185">Reference proteome</keyword>
<keyword id="KW-0804">Transcription</keyword>
<keyword id="KW-0805">Transcription regulation</keyword>
<comment type="function">
    <text evidence="1">Promotes transcriptional elongation by Su(Tpl)/ELL. Essential for development (By similarity).</text>
</comment>
<comment type="subcellular location">
    <subcellularLocation>
        <location evidence="2">Nucleus</location>
    </subcellularLocation>
</comment>
<comment type="similarity">
    <text evidence="3">Belongs to the EAF family.</text>
</comment>
<accession>B4LMA2</accession>
<protein>
    <recommendedName>
        <fullName evidence="1">Ell-associated factor Eaf</fullName>
    </recommendedName>
</protein>
<name>EAF_DROVI</name>
<sequence length="494" mass="54087">MMMTKQKSTLTERLNIGGDEVRELKLGATFNPKNTSTAFHTIKYDFKPASVDTSRMATVDVGSNNQVTVTVPNLESSGVPQTVYKGNHKKYTKECLIIFDKETGAITLERLNHNIQVKKTRSEVTNKPSLMSATNAPMSNGAPVPSSAAAGTGSAGKLENSTMRISSKTKVSTGSRRNNIIDFKPRNSPMQQSSPSRPVASHRSPQSAPAWHANNAQQTLPSIPMIMDDDDFGLSAALHNGSQANISGSSTGSSAGQPDYASVHSGKQRQATPQGHAKRQQLTQRSSPPMQQQQHQNYGRGSNNYAQQQQQQQQQQLQQRASFSHSNHSNSMPMDMDSPTHNEQTAQSMAQAAAALEQQIGGELSASSSSSESDSSDSDSGSDSDDSTEDDRPNHHTNQQLPPAQQPQHHHMQHQQQQHMHQLPNLELGSVSPAYNSHHHHQQQQQSHHHHHHQQQQQQQHQQSGIYASNGGFPNDLLQNDLQLSSNSSDDDDD</sequence>
<reference evidence="5" key="1">
    <citation type="journal article" date="2007" name="Nature">
        <title>Evolution of genes and genomes on the Drosophila phylogeny.</title>
        <authorList>
            <consortium name="Drosophila 12 genomes consortium"/>
        </authorList>
    </citation>
    <scope>NUCLEOTIDE SEQUENCE [LARGE SCALE GENOMIC DNA]</scope>
    <source>
        <strain evidence="5">Tucson 15010-1051.87</strain>
    </source>
</reference>
<organism>
    <name type="scientific">Drosophila virilis</name>
    <name type="common">Fruit fly</name>
    <dbReference type="NCBI Taxonomy" id="7244"/>
    <lineage>
        <taxon>Eukaryota</taxon>
        <taxon>Metazoa</taxon>
        <taxon>Ecdysozoa</taxon>
        <taxon>Arthropoda</taxon>
        <taxon>Hexapoda</taxon>
        <taxon>Insecta</taxon>
        <taxon>Pterygota</taxon>
        <taxon>Neoptera</taxon>
        <taxon>Endopterygota</taxon>
        <taxon>Diptera</taxon>
        <taxon>Brachycera</taxon>
        <taxon>Muscomorpha</taxon>
        <taxon>Ephydroidea</taxon>
        <taxon>Drosophilidae</taxon>
        <taxon>Drosophila</taxon>
    </lineage>
</organism>